<name>LPOA_GLAP5</name>
<reference key="1">
    <citation type="journal article" date="2009" name="J. Bacteriol.">
        <title>Complete genome sequence of Haemophilus parasuis SH0165.</title>
        <authorList>
            <person name="Yue M."/>
            <person name="Yang F."/>
            <person name="Yang J."/>
            <person name="Bei W."/>
            <person name="Cai X."/>
            <person name="Chen L."/>
            <person name="Dong J."/>
            <person name="Zhou R."/>
            <person name="Jin M."/>
            <person name="Jin Q."/>
            <person name="Chen H."/>
        </authorList>
    </citation>
    <scope>NUCLEOTIDE SEQUENCE [LARGE SCALE GENOMIC DNA]</scope>
    <source>
        <strain>SH0165</strain>
    </source>
</reference>
<evidence type="ECO:0000255" key="1">
    <source>
        <dbReference type="HAMAP-Rule" id="MF_01890"/>
    </source>
</evidence>
<comment type="function">
    <text evidence="1">Regulator of peptidoglycan synthesis that is essential for the function of penicillin-binding protein 1A (PBP1a).</text>
</comment>
<comment type="subunit">
    <text evidence="1">Interacts with PBP1a.</text>
</comment>
<comment type="subcellular location">
    <subcellularLocation>
        <location evidence="1">Cell outer membrane</location>
        <topology evidence="1">Lipid-anchor</topology>
        <orientation evidence="1">Periplasmic side</orientation>
    </subcellularLocation>
</comment>
<comment type="similarity">
    <text evidence="1">Belongs to the LpoA family.</text>
</comment>
<organism>
    <name type="scientific">Glaesserella parasuis serovar 5 (strain SH0165)</name>
    <name type="common">Haemophilus parasuis</name>
    <dbReference type="NCBI Taxonomy" id="557723"/>
    <lineage>
        <taxon>Bacteria</taxon>
        <taxon>Pseudomonadati</taxon>
        <taxon>Pseudomonadota</taxon>
        <taxon>Gammaproteobacteria</taxon>
        <taxon>Pasteurellales</taxon>
        <taxon>Pasteurellaceae</taxon>
        <taxon>Glaesserella</taxon>
    </lineage>
</organism>
<proteinExistence type="inferred from homology"/>
<feature type="signal peptide" evidence="1">
    <location>
        <begin position="1"/>
        <end position="30"/>
    </location>
</feature>
<feature type="chain" id="PRO_0000405934" description="Penicillin-binding protein activator LpoA">
    <location>
        <begin position="31"/>
        <end position="578"/>
    </location>
</feature>
<feature type="lipid moiety-binding region" description="N-palmitoyl cysteine" evidence="1">
    <location>
        <position position="31"/>
    </location>
</feature>
<feature type="lipid moiety-binding region" description="S-diacylglycerol cysteine" evidence="1">
    <location>
        <position position="31"/>
    </location>
</feature>
<gene>
    <name evidence="1" type="primary">lpoA</name>
    <name type="synonym">lppC</name>
    <name type="ordered locus">HAPS_0749</name>
</gene>
<keyword id="KW-0998">Cell outer membrane</keyword>
<keyword id="KW-0133">Cell shape</keyword>
<keyword id="KW-0449">Lipoprotein</keyword>
<keyword id="KW-0472">Membrane</keyword>
<keyword id="KW-0564">Palmitate</keyword>
<keyword id="KW-0573">Peptidoglycan synthesis</keyword>
<keyword id="KW-1185">Reference proteome</keyword>
<keyword id="KW-0732">Signal</keyword>
<dbReference type="EMBL" id="CP001321">
    <property type="protein sequence ID" value="ACL32393.1"/>
    <property type="molecule type" value="Genomic_DNA"/>
</dbReference>
<dbReference type="RefSeq" id="WP_012621890.1">
    <property type="nucleotide sequence ID" value="NC_011852.1"/>
</dbReference>
<dbReference type="SMR" id="B8F4Z1"/>
<dbReference type="STRING" id="557723.HAPS_0749"/>
<dbReference type="KEGG" id="hap:HAPS_0749"/>
<dbReference type="PATRIC" id="fig|557723.8.peg.748"/>
<dbReference type="HOGENOM" id="CLU_026091_1_1_6"/>
<dbReference type="Proteomes" id="UP000006743">
    <property type="component" value="Chromosome"/>
</dbReference>
<dbReference type="GO" id="GO:0031241">
    <property type="term" value="C:periplasmic side of cell outer membrane"/>
    <property type="evidence" value="ECO:0007669"/>
    <property type="project" value="UniProtKB-UniRule"/>
</dbReference>
<dbReference type="GO" id="GO:0030234">
    <property type="term" value="F:enzyme regulator activity"/>
    <property type="evidence" value="ECO:0007669"/>
    <property type="project" value="UniProtKB-UniRule"/>
</dbReference>
<dbReference type="GO" id="GO:0009252">
    <property type="term" value="P:peptidoglycan biosynthetic process"/>
    <property type="evidence" value="ECO:0007669"/>
    <property type="project" value="UniProtKB-UniRule"/>
</dbReference>
<dbReference type="GO" id="GO:0008360">
    <property type="term" value="P:regulation of cell shape"/>
    <property type="evidence" value="ECO:0007669"/>
    <property type="project" value="UniProtKB-KW"/>
</dbReference>
<dbReference type="CDD" id="cd06339">
    <property type="entry name" value="PBP1_YraM_LppC_lipoprotein-like"/>
    <property type="match status" value="1"/>
</dbReference>
<dbReference type="Gene3D" id="1.25.40.650">
    <property type="match status" value="1"/>
</dbReference>
<dbReference type="Gene3D" id="3.40.50.2300">
    <property type="match status" value="2"/>
</dbReference>
<dbReference type="Gene3D" id="1.25.40.10">
    <property type="entry name" value="Tetratricopeptide repeat domain"/>
    <property type="match status" value="1"/>
</dbReference>
<dbReference type="HAMAP" id="MF_01890">
    <property type="entry name" value="LpoA"/>
    <property type="match status" value="1"/>
</dbReference>
<dbReference type="InterPro" id="IPR007443">
    <property type="entry name" value="LpoA"/>
</dbReference>
<dbReference type="InterPro" id="IPR028082">
    <property type="entry name" value="Peripla_BP_I"/>
</dbReference>
<dbReference type="InterPro" id="IPR011990">
    <property type="entry name" value="TPR-like_helical_dom_sf"/>
</dbReference>
<dbReference type="PANTHER" id="PTHR38038">
    <property type="entry name" value="PENICILLIN-BINDING PROTEIN ACTIVATOR LPOA"/>
    <property type="match status" value="1"/>
</dbReference>
<dbReference type="PANTHER" id="PTHR38038:SF1">
    <property type="entry name" value="PENICILLIN-BINDING PROTEIN ACTIVATOR LPOA"/>
    <property type="match status" value="1"/>
</dbReference>
<dbReference type="Pfam" id="PF04348">
    <property type="entry name" value="LppC"/>
    <property type="match status" value="1"/>
</dbReference>
<dbReference type="SUPFAM" id="SSF53822">
    <property type="entry name" value="Periplasmic binding protein-like I"/>
    <property type="match status" value="1"/>
</dbReference>
<protein>
    <recommendedName>
        <fullName evidence="1">Penicillin-binding protein activator LpoA</fullName>
        <shortName evidence="1">PBP activator LpoA</shortName>
    </recommendedName>
</protein>
<accession>B8F4Z1</accession>
<sequence>MPTILVQSYGFRQKMKTIFIPTALALLLAACSGNKVTETLKNEAYGNSEFYINKAEQSRNIEEQQSYRLLAVRKLIEENKVVEAQNTFSEILVAKLNDEQKLEHRLLIAQLAALQGNTEAQGVLRALPQTLLSQSQRLRVYQTQARIAENQNDVIAAVNARALMDSYMTDTQSRQANNDKIWEMLRNANRGMLEKAVAGPGEIGLAGWLALVVAYNQNMSNPAQLPQVIEMWKQQYPNHSAVLLLPIELRNVSSFQQTQLNGVALLLPLSGDAKILGEIIKRGFDDAKGTTTMQVQVFDTDSAPINDLLMQAKQQGAQTIIGPLLKPRVDEMLTSPEISNINVLALNSTPNVRAVAKVCYYGLSPEAEARSAAERFLKDGLQHAVVVAPNGDFGTRSAEAFAQRWRQLTNRDTDIRYYNQAFEVTSLLQGSGIGQGSGLYALGTAEQLSDLKQSLDNSPLANQFPIYTSSRSNSPNNGPDFRLTMEGVKFSEIPLLSDPSSSEYKKAEQIVESDFSMMRLYAMGSDTWSIANKFNEFRQIPGYKVHGLTGVLSAGPNCNIEREMNWLQYRGGSIVDAN</sequence>